<reference key="1">
    <citation type="journal article" date="2008" name="Antimicrob. Agents Chemother.">
        <title>Whole-genome pyrosequencing of an epidemic multidrug-resistant Acinetobacter baumannii strain belonging to the European clone II group.</title>
        <authorList>
            <person name="Iacono M."/>
            <person name="Villa L."/>
            <person name="Fortini D."/>
            <person name="Bordoni R."/>
            <person name="Imperi F."/>
            <person name="Bonnal R.J."/>
            <person name="Sicheritz-Ponten T."/>
            <person name="De Bellis G."/>
            <person name="Visca P."/>
            <person name="Cassone A."/>
            <person name="Carattoli A."/>
        </authorList>
    </citation>
    <scope>NUCLEOTIDE SEQUENCE [LARGE SCALE GENOMIC DNA]</scope>
    <source>
        <strain>ACICU</strain>
    </source>
</reference>
<feature type="chain" id="PRO_1000140017" description="Multifunctional CCA protein">
    <location>
        <begin position="1"/>
        <end position="412"/>
    </location>
</feature>
<feature type="domain" description="HD" evidence="1">
    <location>
        <begin position="228"/>
        <end position="329"/>
    </location>
</feature>
<feature type="binding site" evidence="1">
    <location>
        <position position="8"/>
    </location>
    <ligand>
        <name>ATP</name>
        <dbReference type="ChEBI" id="CHEBI:30616"/>
    </ligand>
</feature>
<feature type="binding site" evidence="1">
    <location>
        <position position="8"/>
    </location>
    <ligand>
        <name>CTP</name>
        <dbReference type="ChEBI" id="CHEBI:37563"/>
    </ligand>
</feature>
<feature type="binding site" evidence="1">
    <location>
        <position position="11"/>
    </location>
    <ligand>
        <name>ATP</name>
        <dbReference type="ChEBI" id="CHEBI:30616"/>
    </ligand>
</feature>
<feature type="binding site" evidence="1">
    <location>
        <position position="11"/>
    </location>
    <ligand>
        <name>CTP</name>
        <dbReference type="ChEBI" id="CHEBI:37563"/>
    </ligand>
</feature>
<feature type="binding site" evidence="1">
    <location>
        <position position="21"/>
    </location>
    <ligand>
        <name>Mg(2+)</name>
        <dbReference type="ChEBI" id="CHEBI:18420"/>
    </ligand>
</feature>
<feature type="binding site" evidence="1">
    <location>
        <position position="23"/>
    </location>
    <ligand>
        <name>Mg(2+)</name>
        <dbReference type="ChEBI" id="CHEBI:18420"/>
    </ligand>
</feature>
<feature type="binding site" evidence="1">
    <location>
        <position position="91"/>
    </location>
    <ligand>
        <name>ATP</name>
        <dbReference type="ChEBI" id="CHEBI:30616"/>
    </ligand>
</feature>
<feature type="binding site" evidence="1">
    <location>
        <position position="91"/>
    </location>
    <ligand>
        <name>CTP</name>
        <dbReference type="ChEBI" id="CHEBI:37563"/>
    </ligand>
</feature>
<feature type="binding site" evidence="1">
    <location>
        <position position="137"/>
    </location>
    <ligand>
        <name>ATP</name>
        <dbReference type="ChEBI" id="CHEBI:30616"/>
    </ligand>
</feature>
<feature type="binding site" evidence="1">
    <location>
        <position position="137"/>
    </location>
    <ligand>
        <name>CTP</name>
        <dbReference type="ChEBI" id="CHEBI:37563"/>
    </ligand>
</feature>
<feature type="binding site" evidence="1">
    <location>
        <position position="140"/>
    </location>
    <ligand>
        <name>ATP</name>
        <dbReference type="ChEBI" id="CHEBI:30616"/>
    </ligand>
</feature>
<feature type="binding site" evidence="1">
    <location>
        <position position="140"/>
    </location>
    <ligand>
        <name>CTP</name>
        <dbReference type="ChEBI" id="CHEBI:37563"/>
    </ligand>
</feature>
<comment type="function">
    <text evidence="1">Catalyzes the addition and repair of the essential 3'-terminal CCA sequence in tRNAs without using a nucleic acid template. Adds these three nucleotides in the order of C, C, and A to the tRNA nucleotide-73, using CTP and ATP as substrates and producing inorganic pyrophosphate. tRNA 3'-terminal CCA addition is required both for tRNA processing and repair. Also involved in tRNA surveillance by mediating tandem CCA addition to generate a CCACCA at the 3' terminus of unstable tRNAs. While stable tRNAs receive only 3'-terminal CCA, unstable tRNAs are marked with CCACCA and rapidly degraded.</text>
</comment>
<comment type="catalytic activity">
    <reaction evidence="1">
        <text>a tRNA precursor + 2 CTP + ATP = a tRNA with a 3' CCA end + 3 diphosphate</text>
        <dbReference type="Rhea" id="RHEA:14433"/>
        <dbReference type="Rhea" id="RHEA-COMP:10465"/>
        <dbReference type="Rhea" id="RHEA-COMP:10468"/>
        <dbReference type="ChEBI" id="CHEBI:30616"/>
        <dbReference type="ChEBI" id="CHEBI:33019"/>
        <dbReference type="ChEBI" id="CHEBI:37563"/>
        <dbReference type="ChEBI" id="CHEBI:74896"/>
        <dbReference type="ChEBI" id="CHEBI:83071"/>
        <dbReference type="EC" id="2.7.7.72"/>
    </reaction>
</comment>
<comment type="catalytic activity">
    <reaction evidence="1">
        <text>a tRNA with a 3' CCA end + 2 CTP + ATP = a tRNA with a 3' CCACCA end + 3 diphosphate</text>
        <dbReference type="Rhea" id="RHEA:76235"/>
        <dbReference type="Rhea" id="RHEA-COMP:10468"/>
        <dbReference type="Rhea" id="RHEA-COMP:18655"/>
        <dbReference type="ChEBI" id="CHEBI:30616"/>
        <dbReference type="ChEBI" id="CHEBI:33019"/>
        <dbReference type="ChEBI" id="CHEBI:37563"/>
        <dbReference type="ChEBI" id="CHEBI:83071"/>
        <dbReference type="ChEBI" id="CHEBI:195187"/>
    </reaction>
    <physiologicalReaction direction="left-to-right" evidence="1">
        <dbReference type="Rhea" id="RHEA:76236"/>
    </physiologicalReaction>
</comment>
<comment type="cofactor">
    <cofactor evidence="1">
        <name>Mg(2+)</name>
        <dbReference type="ChEBI" id="CHEBI:18420"/>
    </cofactor>
    <text evidence="1">Magnesium is required for nucleotidyltransferase activity.</text>
</comment>
<comment type="cofactor">
    <cofactor evidence="1">
        <name>Ni(2+)</name>
        <dbReference type="ChEBI" id="CHEBI:49786"/>
    </cofactor>
    <text evidence="1">Nickel for phosphatase activity.</text>
</comment>
<comment type="subunit">
    <text evidence="1">Monomer. Can also form homodimers and oligomers.</text>
</comment>
<comment type="domain">
    <text evidence="1">Comprises two domains: an N-terminal domain containing the nucleotidyltransferase activity and a C-terminal HD domain associated with both phosphodiesterase and phosphatase activities.</text>
</comment>
<comment type="miscellaneous">
    <text evidence="1">A single active site specifically recognizes both ATP and CTP and is responsible for their addition.</text>
</comment>
<comment type="similarity">
    <text evidence="1">Belongs to the tRNA nucleotidyltransferase/poly(A) polymerase family. Bacterial CCA-adding enzyme type 1 subfamily.</text>
</comment>
<accession>B2HV23</accession>
<organism>
    <name type="scientific">Acinetobacter baumannii (strain ACICU)</name>
    <dbReference type="NCBI Taxonomy" id="405416"/>
    <lineage>
        <taxon>Bacteria</taxon>
        <taxon>Pseudomonadati</taxon>
        <taxon>Pseudomonadota</taxon>
        <taxon>Gammaproteobacteria</taxon>
        <taxon>Moraxellales</taxon>
        <taxon>Moraxellaceae</taxon>
        <taxon>Acinetobacter</taxon>
        <taxon>Acinetobacter calcoaceticus/baumannii complex</taxon>
    </lineage>
</organism>
<name>CCA_ACIBC</name>
<dbReference type="EC" id="2.7.7.72" evidence="1"/>
<dbReference type="EC" id="3.1.3.-" evidence="1"/>
<dbReference type="EC" id="3.1.4.-" evidence="1"/>
<dbReference type="EMBL" id="CP000863">
    <property type="protein sequence ID" value="ACC57853.1"/>
    <property type="molecule type" value="Genomic_DNA"/>
</dbReference>
<dbReference type="RefSeq" id="WP_001198539.1">
    <property type="nucleotide sequence ID" value="NZ_CP031380.1"/>
</dbReference>
<dbReference type="SMR" id="B2HV23"/>
<dbReference type="KEGG" id="abc:ACICU_02541"/>
<dbReference type="HOGENOM" id="CLU_015961_1_1_6"/>
<dbReference type="Proteomes" id="UP000008839">
    <property type="component" value="Chromosome"/>
</dbReference>
<dbReference type="GO" id="GO:0005524">
    <property type="term" value="F:ATP binding"/>
    <property type="evidence" value="ECO:0007669"/>
    <property type="project" value="UniProtKB-UniRule"/>
</dbReference>
<dbReference type="GO" id="GO:0004810">
    <property type="term" value="F:CCA tRNA nucleotidyltransferase activity"/>
    <property type="evidence" value="ECO:0007669"/>
    <property type="project" value="UniProtKB-UniRule"/>
</dbReference>
<dbReference type="GO" id="GO:0004112">
    <property type="term" value="F:cyclic-nucleotide phosphodiesterase activity"/>
    <property type="evidence" value="ECO:0007669"/>
    <property type="project" value="UniProtKB-UniRule"/>
</dbReference>
<dbReference type="GO" id="GO:0000287">
    <property type="term" value="F:magnesium ion binding"/>
    <property type="evidence" value="ECO:0007669"/>
    <property type="project" value="UniProtKB-UniRule"/>
</dbReference>
<dbReference type="GO" id="GO:0016791">
    <property type="term" value="F:phosphatase activity"/>
    <property type="evidence" value="ECO:0007669"/>
    <property type="project" value="UniProtKB-UniRule"/>
</dbReference>
<dbReference type="GO" id="GO:0000049">
    <property type="term" value="F:tRNA binding"/>
    <property type="evidence" value="ECO:0007669"/>
    <property type="project" value="UniProtKB-UniRule"/>
</dbReference>
<dbReference type="GO" id="GO:0042245">
    <property type="term" value="P:RNA repair"/>
    <property type="evidence" value="ECO:0007669"/>
    <property type="project" value="UniProtKB-KW"/>
</dbReference>
<dbReference type="GO" id="GO:0001680">
    <property type="term" value="P:tRNA 3'-terminal CCA addition"/>
    <property type="evidence" value="ECO:0007669"/>
    <property type="project" value="UniProtKB-UniRule"/>
</dbReference>
<dbReference type="CDD" id="cd00077">
    <property type="entry name" value="HDc"/>
    <property type="match status" value="1"/>
</dbReference>
<dbReference type="CDD" id="cd05398">
    <property type="entry name" value="NT_ClassII-CCAase"/>
    <property type="match status" value="1"/>
</dbReference>
<dbReference type="Gene3D" id="3.30.460.10">
    <property type="entry name" value="Beta Polymerase, domain 2"/>
    <property type="match status" value="1"/>
</dbReference>
<dbReference type="Gene3D" id="1.10.3090.10">
    <property type="entry name" value="cca-adding enzyme, domain 2"/>
    <property type="match status" value="1"/>
</dbReference>
<dbReference type="HAMAP" id="MF_01261">
    <property type="entry name" value="CCA_bact_type1"/>
    <property type="match status" value="1"/>
</dbReference>
<dbReference type="HAMAP" id="MF_01262">
    <property type="entry name" value="CCA_bact_type2"/>
    <property type="match status" value="1"/>
</dbReference>
<dbReference type="InterPro" id="IPR012006">
    <property type="entry name" value="CCA_bact"/>
</dbReference>
<dbReference type="InterPro" id="IPR003607">
    <property type="entry name" value="HD/PDEase_dom"/>
</dbReference>
<dbReference type="InterPro" id="IPR006674">
    <property type="entry name" value="HD_domain"/>
</dbReference>
<dbReference type="InterPro" id="IPR043519">
    <property type="entry name" value="NT_sf"/>
</dbReference>
<dbReference type="InterPro" id="IPR002646">
    <property type="entry name" value="PolA_pol_head_dom"/>
</dbReference>
<dbReference type="InterPro" id="IPR032828">
    <property type="entry name" value="PolyA_RNA-bd"/>
</dbReference>
<dbReference type="InterPro" id="IPR050124">
    <property type="entry name" value="tRNA_CCA-adding_enzyme"/>
</dbReference>
<dbReference type="NCBIfam" id="NF008137">
    <property type="entry name" value="PRK10885.1"/>
    <property type="match status" value="1"/>
</dbReference>
<dbReference type="PANTHER" id="PTHR47545">
    <property type="entry name" value="MULTIFUNCTIONAL CCA PROTEIN"/>
    <property type="match status" value="1"/>
</dbReference>
<dbReference type="PANTHER" id="PTHR47545:SF1">
    <property type="entry name" value="MULTIFUNCTIONAL CCA PROTEIN"/>
    <property type="match status" value="1"/>
</dbReference>
<dbReference type="Pfam" id="PF01966">
    <property type="entry name" value="HD"/>
    <property type="match status" value="1"/>
</dbReference>
<dbReference type="Pfam" id="PF01743">
    <property type="entry name" value="PolyA_pol"/>
    <property type="match status" value="1"/>
</dbReference>
<dbReference type="Pfam" id="PF12627">
    <property type="entry name" value="PolyA_pol_RNAbd"/>
    <property type="match status" value="1"/>
</dbReference>
<dbReference type="PIRSF" id="PIRSF000813">
    <property type="entry name" value="CCA_bact"/>
    <property type="match status" value="1"/>
</dbReference>
<dbReference type="SUPFAM" id="SSF81301">
    <property type="entry name" value="Nucleotidyltransferase"/>
    <property type="match status" value="1"/>
</dbReference>
<dbReference type="SUPFAM" id="SSF81891">
    <property type="entry name" value="Poly A polymerase C-terminal region-like"/>
    <property type="match status" value="1"/>
</dbReference>
<dbReference type="PROSITE" id="PS51831">
    <property type="entry name" value="HD"/>
    <property type="match status" value="1"/>
</dbReference>
<gene>
    <name evidence="1" type="primary">cca</name>
    <name type="ordered locus">ACICU_02541</name>
</gene>
<evidence type="ECO:0000255" key="1">
    <source>
        <dbReference type="HAMAP-Rule" id="MF_01261"/>
    </source>
</evidence>
<keyword id="KW-0067">ATP-binding</keyword>
<keyword id="KW-0378">Hydrolase</keyword>
<keyword id="KW-0460">Magnesium</keyword>
<keyword id="KW-0479">Metal-binding</keyword>
<keyword id="KW-0511">Multifunctional enzyme</keyword>
<keyword id="KW-0533">Nickel</keyword>
<keyword id="KW-0547">Nucleotide-binding</keyword>
<keyword id="KW-0548">Nucleotidyltransferase</keyword>
<keyword id="KW-0692">RNA repair</keyword>
<keyword id="KW-0694">RNA-binding</keyword>
<keyword id="KW-0808">Transferase</keyword>
<keyword id="KW-0819">tRNA processing</keyword>
<proteinExistence type="inferred from homology"/>
<sequence length="412" mass="47189">MQVYLVGGAVRDYLLGHPYQEKDYVVVGATPEHMLAQGFQPVGKDFPVFLHPETKEEYALARTERKSGQGYHGFQFFTDTTVSLEDDLIRRDLTINAIAMDQDGKIYDPYGGQNDLENKILRHVSEAFAEDPLRVLRVARFAARYFPYGFQIAPETLQLMQTMADSGELDALTPERVWKETSRALMENHADIYFQTLRDCGALKHLFPEIDALFGVPQRPEYHPEVDCGIHTLMSLQQACKSNYSLDVRFAVLVHDLGKALTPAEELPRHIMHEERGIKPVTQLCERLRVPTQTKQLALSVCKEHLKCHQIMSLKPGTLWRLLQRLDVLRRPERVEAFVQACECDAKGRLGLEDRPYPQAQYMREAMQIVRSIKVQDLPENIKGAEIGEMLIQYRIEALAEFKNQHQSLSHS</sequence>
<protein>
    <recommendedName>
        <fullName evidence="1">Multifunctional CCA protein</fullName>
    </recommendedName>
    <domain>
        <recommendedName>
            <fullName evidence="1">CCA-adding enzyme</fullName>
            <ecNumber evidence="1">2.7.7.72</ecNumber>
        </recommendedName>
        <alternativeName>
            <fullName evidence="1">CCA tRNA nucleotidyltransferase</fullName>
        </alternativeName>
        <alternativeName>
            <fullName evidence="1">tRNA CCA-pyrophosphorylase</fullName>
        </alternativeName>
        <alternativeName>
            <fullName evidence="1">tRNA adenylyl-/cytidylyl-transferase</fullName>
        </alternativeName>
        <alternativeName>
            <fullName evidence="1">tRNA nucleotidyltransferase</fullName>
        </alternativeName>
        <alternativeName>
            <fullName evidence="1">tRNA-NT</fullName>
        </alternativeName>
    </domain>
    <domain>
        <recommendedName>
            <fullName evidence="1">2'-nucleotidase</fullName>
            <ecNumber evidence="1">3.1.3.-</ecNumber>
        </recommendedName>
    </domain>
    <domain>
        <recommendedName>
            <fullName evidence="1">2',3'-cyclic phosphodiesterase</fullName>
            <ecNumber evidence="1">3.1.4.-</ecNumber>
        </recommendedName>
    </domain>
    <domain>
        <recommendedName>
            <fullName evidence="1">Phosphatase</fullName>
            <ecNumber evidence="1">3.1.3.-</ecNumber>
        </recommendedName>
    </domain>
</protein>